<gene>
    <name evidence="3" type="primary">NRS/ER</name>
    <name evidence="5" type="ordered locus">At1g63000</name>
    <name evidence="6" type="ORF">F16P17.17</name>
</gene>
<feature type="chain" id="PRO_0000431251" description="Bifunctional dTDP-4-dehydrorhamnose 3,5-epimerase/dTDP-4-dehydrorhamnose reductase">
    <location>
        <begin position="1"/>
        <end position="301"/>
    </location>
</feature>
<feature type="binding site" evidence="1">
    <location>
        <begin position="23"/>
        <end position="24"/>
    </location>
    <ligand>
        <name>NADPH</name>
        <dbReference type="ChEBI" id="CHEBI:57783"/>
    </ligand>
</feature>
<feature type="binding site" evidence="1">
    <location>
        <begin position="69"/>
        <end position="71"/>
    </location>
    <ligand>
        <name>NADPH</name>
        <dbReference type="ChEBI" id="CHEBI:57783"/>
    </ligand>
</feature>
<feature type="binding site" evidence="1">
    <location>
        <position position="111"/>
    </location>
    <ligand>
        <name>NADPH</name>
        <dbReference type="ChEBI" id="CHEBI:57783"/>
    </ligand>
</feature>
<feature type="sequence conflict" description="In Ref. 5; AAM65668." ref="5">
    <location>
        <position position="8"/>
    </location>
</feature>
<feature type="sequence conflict" description="In Ref. 5; AAM65668." ref="5">
    <original>AQGIT</original>
    <variation>SQGIS</variation>
    <location>
        <begin position="34"/>
        <end position="38"/>
    </location>
</feature>
<feature type="sequence conflict" description="In Ref. 4; AAK62450." ref="4">
    <original>P</original>
    <variation>H</variation>
    <location>
        <position position="124"/>
    </location>
</feature>
<feature type="strand" evidence="7">
    <location>
        <begin position="14"/>
        <end position="18"/>
    </location>
</feature>
<feature type="helix" evidence="7">
    <location>
        <begin position="23"/>
        <end position="34"/>
    </location>
</feature>
<feature type="strand" evidence="7">
    <location>
        <begin position="38"/>
        <end position="41"/>
    </location>
</feature>
<feature type="helix" evidence="7">
    <location>
        <begin position="49"/>
        <end position="59"/>
    </location>
</feature>
<feature type="strand" evidence="7">
    <location>
        <begin position="62"/>
        <end position="66"/>
    </location>
</feature>
<feature type="helix" evidence="7">
    <location>
        <begin position="80"/>
        <end position="90"/>
    </location>
</feature>
<feature type="helix" evidence="7">
    <location>
        <begin position="92"/>
        <end position="103"/>
    </location>
</feature>
<feature type="strand" evidence="7">
    <location>
        <begin position="107"/>
        <end position="114"/>
    </location>
</feature>
<feature type="helix" evidence="7">
    <location>
        <begin position="143"/>
        <end position="155"/>
    </location>
</feature>
<feature type="strand" evidence="7">
    <location>
        <begin position="161"/>
        <end position="166"/>
    </location>
</feature>
<feature type="helix" evidence="7">
    <location>
        <begin position="180"/>
        <end position="186"/>
    </location>
</feature>
<feature type="strand" evidence="7">
    <location>
        <begin position="187"/>
        <end position="190"/>
    </location>
</feature>
<feature type="helix" evidence="7">
    <location>
        <begin position="200"/>
        <end position="212"/>
    </location>
</feature>
<feature type="strand" evidence="7">
    <location>
        <begin position="217"/>
        <end position="220"/>
    </location>
</feature>
<feature type="helix" evidence="7">
    <location>
        <begin position="229"/>
        <end position="239"/>
    </location>
</feature>
<feature type="helix" evidence="7">
    <location>
        <begin position="270"/>
        <end position="275"/>
    </location>
</feature>
<feature type="helix" evidence="7">
    <location>
        <begin position="282"/>
        <end position="289"/>
    </location>
</feature>
<feature type="helix" evidence="7">
    <location>
        <begin position="292"/>
        <end position="294"/>
    </location>
</feature>
<dbReference type="EC" id="1.1.1.133" evidence="2"/>
<dbReference type="EC" id="5.1.3.13" evidence="2"/>
<dbReference type="EMBL" id="AY513232">
    <property type="protein sequence ID" value="AAR99502.1"/>
    <property type="molecule type" value="mRNA"/>
</dbReference>
<dbReference type="EMBL" id="AC011000">
    <property type="protein sequence ID" value="AAF75813.1"/>
    <property type="molecule type" value="Genomic_DNA"/>
</dbReference>
<dbReference type="EMBL" id="CP002684">
    <property type="protein sequence ID" value="AEE34035.1"/>
    <property type="molecule type" value="Genomic_DNA"/>
</dbReference>
<dbReference type="EMBL" id="AF332445">
    <property type="protein sequence ID" value="AAG48808.1"/>
    <property type="molecule type" value="mRNA"/>
</dbReference>
<dbReference type="EMBL" id="AF387005">
    <property type="protein sequence ID" value="AAK62450.1"/>
    <property type="molecule type" value="mRNA"/>
</dbReference>
<dbReference type="EMBL" id="AY088123">
    <property type="protein sequence ID" value="AAM65668.1"/>
    <property type="molecule type" value="mRNA"/>
</dbReference>
<dbReference type="PIR" id="B96655">
    <property type="entry name" value="B96655"/>
</dbReference>
<dbReference type="RefSeq" id="NP_564806.1">
    <property type="nucleotide sequence ID" value="NM_104978.5"/>
</dbReference>
<dbReference type="PDB" id="4QQR">
    <property type="method" value="X-ray"/>
    <property type="resolution" value="2.70 A"/>
    <property type="chains" value="A/B=1-301"/>
</dbReference>
<dbReference type="PDBsum" id="4QQR"/>
<dbReference type="SMR" id="Q9LQ04"/>
<dbReference type="BioGRID" id="27824">
    <property type="interactions" value="6"/>
</dbReference>
<dbReference type="FunCoup" id="Q9LQ04">
    <property type="interactions" value="753"/>
</dbReference>
<dbReference type="IntAct" id="Q9LQ04">
    <property type="interactions" value="1"/>
</dbReference>
<dbReference type="STRING" id="3702.Q9LQ04"/>
<dbReference type="iPTMnet" id="Q9LQ04"/>
<dbReference type="MetOSite" id="Q9LQ04"/>
<dbReference type="PaxDb" id="3702-AT1G63000.1"/>
<dbReference type="ProMEX" id="Q9LQ04"/>
<dbReference type="ProteomicsDB" id="228122"/>
<dbReference type="DNASU" id="842603"/>
<dbReference type="EnsemblPlants" id="AT1G63000.1">
    <property type="protein sequence ID" value="AT1G63000.1"/>
    <property type="gene ID" value="AT1G63000"/>
</dbReference>
<dbReference type="GeneID" id="842603"/>
<dbReference type="Gramene" id="AT1G63000.1">
    <property type="protein sequence ID" value="AT1G63000.1"/>
    <property type="gene ID" value="AT1G63000"/>
</dbReference>
<dbReference type="KEGG" id="ath:AT1G63000"/>
<dbReference type="Araport" id="AT1G63000"/>
<dbReference type="TAIR" id="AT1G63000">
    <property type="gene designation" value="NRS/ER"/>
</dbReference>
<dbReference type="eggNOG" id="KOG0747">
    <property type="taxonomic scope" value="Eukaryota"/>
</dbReference>
<dbReference type="HOGENOM" id="CLU_055718_1_0_1"/>
<dbReference type="InParanoid" id="Q9LQ04"/>
<dbReference type="OMA" id="ETVKPTH"/>
<dbReference type="OrthoDB" id="16464at2759"/>
<dbReference type="PhylomeDB" id="Q9LQ04"/>
<dbReference type="BioCyc" id="ARA:AT1G63000-MONOMER"/>
<dbReference type="BioCyc" id="MetaCyc:AT1G63000-MONOMER"/>
<dbReference type="BRENDA" id="1.1.1.133">
    <property type="organism ID" value="399"/>
</dbReference>
<dbReference type="UniPathway" id="UPA00124"/>
<dbReference type="EvolutionaryTrace" id="Q9LQ04"/>
<dbReference type="PRO" id="PR:Q9LQ04"/>
<dbReference type="Proteomes" id="UP000006548">
    <property type="component" value="Chromosome 1"/>
</dbReference>
<dbReference type="ExpressionAtlas" id="Q9LQ04">
    <property type="expression patterns" value="baseline and differential"/>
</dbReference>
<dbReference type="GO" id="GO:0005886">
    <property type="term" value="C:plasma membrane"/>
    <property type="evidence" value="ECO:0007005"/>
    <property type="project" value="TAIR"/>
</dbReference>
<dbReference type="GO" id="GO:0009506">
    <property type="term" value="C:plasmodesma"/>
    <property type="evidence" value="ECO:0007005"/>
    <property type="project" value="TAIR"/>
</dbReference>
<dbReference type="GO" id="GO:0008830">
    <property type="term" value="F:dTDP-4-dehydrorhamnose 3,5-epimerase activity"/>
    <property type="evidence" value="ECO:0000314"/>
    <property type="project" value="TAIR"/>
</dbReference>
<dbReference type="GO" id="GO:0008831">
    <property type="term" value="F:dTDP-4-dehydrorhamnose reductase activity"/>
    <property type="evidence" value="ECO:0000314"/>
    <property type="project" value="TAIR"/>
</dbReference>
<dbReference type="GO" id="GO:0010489">
    <property type="term" value="F:UDP-4-keto-6-deoxy-glucose-3,5-epimerase activity"/>
    <property type="evidence" value="ECO:0000304"/>
    <property type="project" value="TAIR"/>
</dbReference>
<dbReference type="GO" id="GO:0010490">
    <property type="term" value="F:UDP-4-keto-rhamnose-4-keto-reductase activity"/>
    <property type="evidence" value="ECO:0000304"/>
    <property type="project" value="TAIR"/>
</dbReference>
<dbReference type="GO" id="GO:0071555">
    <property type="term" value="P:cell wall organization"/>
    <property type="evidence" value="ECO:0007669"/>
    <property type="project" value="UniProtKB-KW"/>
</dbReference>
<dbReference type="GO" id="GO:0019305">
    <property type="term" value="P:dTDP-rhamnose biosynthetic process"/>
    <property type="evidence" value="ECO:0000314"/>
    <property type="project" value="TAIR"/>
</dbReference>
<dbReference type="GO" id="GO:0010253">
    <property type="term" value="P:UDP-rhamnose biosynthetic process"/>
    <property type="evidence" value="ECO:0000314"/>
    <property type="project" value="TAIR"/>
</dbReference>
<dbReference type="CDD" id="cd05254">
    <property type="entry name" value="dTDP_HR_like_SDR_e"/>
    <property type="match status" value="1"/>
</dbReference>
<dbReference type="FunFam" id="3.40.50.720:FF:000236">
    <property type="entry name" value="Bifunctional dTDP-4-dehydrorhamnose 3,5-epimerase/dTDP-4-dehydrorhamnose reductase"/>
    <property type="match status" value="1"/>
</dbReference>
<dbReference type="Gene3D" id="3.40.50.720">
    <property type="entry name" value="NAD(P)-binding Rossmann-like Domain"/>
    <property type="match status" value="1"/>
</dbReference>
<dbReference type="InterPro" id="IPR005913">
    <property type="entry name" value="dTDP_dehydrorham_reduct"/>
</dbReference>
<dbReference type="InterPro" id="IPR036291">
    <property type="entry name" value="NAD(P)-bd_dom_sf"/>
</dbReference>
<dbReference type="InterPro" id="IPR029903">
    <property type="entry name" value="RmlD-like-bd"/>
</dbReference>
<dbReference type="PANTHER" id="PTHR10491">
    <property type="entry name" value="DTDP-4-DEHYDRORHAMNOSE REDUCTASE"/>
    <property type="match status" value="1"/>
</dbReference>
<dbReference type="PANTHER" id="PTHR10491:SF4">
    <property type="entry name" value="METHIONINE ADENOSYLTRANSFERASE 2 SUBUNIT BETA"/>
    <property type="match status" value="1"/>
</dbReference>
<dbReference type="Pfam" id="PF04321">
    <property type="entry name" value="RmlD_sub_bind"/>
    <property type="match status" value="1"/>
</dbReference>
<dbReference type="SUPFAM" id="SSF51735">
    <property type="entry name" value="NAD(P)-binding Rossmann-fold domains"/>
    <property type="match status" value="1"/>
</dbReference>
<accession>Q9LQ04</accession>
<accession>Q8L9Z8</accession>
<accession>Q94EZ7</accession>
<evidence type="ECO:0000250" key="1">
    <source>
        <dbReference type="UniProtKB" id="P26392"/>
    </source>
</evidence>
<evidence type="ECO:0000269" key="2">
    <source>
    </source>
</evidence>
<evidence type="ECO:0000303" key="3">
    <source>
    </source>
</evidence>
<evidence type="ECO:0000305" key="4"/>
<evidence type="ECO:0000312" key="5">
    <source>
        <dbReference type="Araport" id="AT1G63000"/>
    </source>
</evidence>
<evidence type="ECO:0000312" key="6">
    <source>
        <dbReference type="EMBL" id="AAF75813.1"/>
    </source>
</evidence>
<evidence type="ECO:0007829" key="7">
    <source>
        <dbReference type="PDB" id="4QQR"/>
    </source>
</evidence>
<protein>
    <recommendedName>
        <fullName evidence="4">Bifunctional dTDP-4-dehydrorhamnose 3,5-epimerase/dTDP-4-dehydrorhamnose reductase</fullName>
        <ecNumber evidence="2">1.1.1.133</ecNumber>
        <ecNumber evidence="2">5.1.3.13</ecNumber>
    </recommendedName>
    <alternativeName>
        <fullName>dTDP-L-rhamnose synthase</fullName>
    </alternativeName>
</protein>
<name>RMLCD_ARATH</name>
<reference key="1">
    <citation type="journal article" date="2004" name="Plant Physiol.">
        <title>A bifunctional 3,5-epimerase/4-keto reductase for nucleotide-rhamnose synthesis in Arabidopsis.</title>
        <authorList>
            <person name="Watt G."/>
            <person name="Leoff C."/>
            <person name="Harper A.D."/>
            <person name="Bar-Peled M."/>
        </authorList>
    </citation>
    <scope>NUCLEOTIDE SEQUENCE [MRNA]</scope>
    <scope>FUNCTION</scope>
    <scope>CATALYTIC ACTIVITY</scope>
    <scope>BIOPHYSICOCHEMICAL PROPERTIES</scope>
    <scope>TISSUE SPECIFICITY</scope>
</reference>
<reference key="2">
    <citation type="journal article" date="2000" name="Nature">
        <title>Sequence and analysis of chromosome 1 of the plant Arabidopsis thaliana.</title>
        <authorList>
            <person name="Theologis A."/>
            <person name="Ecker J.R."/>
            <person name="Palm C.J."/>
            <person name="Federspiel N.A."/>
            <person name="Kaul S."/>
            <person name="White O."/>
            <person name="Alonso J."/>
            <person name="Altafi H."/>
            <person name="Araujo R."/>
            <person name="Bowman C.L."/>
            <person name="Brooks S.Y."/>
            <person name="Buehler E."/>
            <person name="Chan A."/>
            <person name="Chao Q."/>
            <person name="Chen H."/>
            <person name="Cheuk R.F."/>
            <person name="Chin C.W."/>
            <person name="Chung M.K."/>
            <person name="Conn L."/>
            <person name="Conway A.B."/>
            <person name="Conway A.R."/>
            <person name="Creasy T.H."/>
            <person name="Dewar K."/>
            <person name="Dunn P."/>
            <person name="Etgu P."/>
            <person name="Feldblyum T.V."/>
            <person name="Feng J.-D."/>
            <person name="Fong B."/>
            <person name="Fujii C.Y."/>
            <person name="Gill J.E."/>
            <person name="Goldsmith A.D."/>
            <person name="Haas B."/>
            <person name="Hansen N.F."/>
            <person name="Hughes B."/>
            <person name="Huizar L."/>
            <person name="Hunter J.L."/>
            <person name="Jenkins J."/>
            <person name="Johnson-Hopson C."/>
            <person name="Khan S."/>
            <person name="Khaykin E."/>
            <person name="Kim C.J."/>
            <person name="Koo H.L."/>
            <person name="Kremenetskaia I."/>
            <person name="Kurtz D.B."/>
            <person name="Kwan A."/>
            <person name="Lam B."/>
            <person name="Langin-Hooper S."/>
            <person name="Lee A."/>
            <person name="Lee J.M."/>
            <person name="Lenz C.A."/>
            <person name="Li J.H."/>
            <person name="Li Y.-P."/>
            <person name="Lin X."/>
            <person name="Liu S.X."/>
            <person name="Liu Z.A."/>
            <person name="Luros J.S."/>
            <person name="Maiti R."/>
            <person name="Marziali A."/>
            <person name="Militscher J."/>
            <person name="Miranda M."/>
            <person name="Nguyen M."/>
            <person name="Nierman W.C."/>
            <person name="Osborne B.I."/>
            <person name="Pai G."/>
            <person name="Peterson J."/>
            <person name="Pham P.K."/>
            <person name="Rizzo M."/>
            <person name="Rooney T."/>
            <person name="Rowley D."/>
            <person name="Sakano H."/>
            <person name="Salzberg S.L."/>
            <person name="Schwartz J.R."/>
            <person name="Shinn P."/>
            <person name="Southwick A.M."/>
            <person name="Sun H."/>
            <person name="Tallon L.J."/>
            <person name="Tambunga G."/>
            <person name="Toriumi M.J."/>
            <person name="Town C.D."/>
            <person name="Utterback T."/>
            <person name="Van Aken S."/>
            <person name="Vaysberg M."/>
            <person name="Vysotskaia V.S."/>
            <person name="Walker M."/>
            <person name="Wu D."/>
            <person name="Yu G."/>
            <person name="Fraser C.M."/>
            <person name="Venter J.C."/>
            <person name="Davis R.W."/>
        </authorList>
    </citation>
    <scope>NUCLEOTIDE SEQUENCE [LARGE SCALE GENOMIC DNA]</scope>
    <source>
        <strain>cv. Columbia</strain>
    </source>
</reference>
<reference key="3">
    <citation type="journal article" date="2017" name="Plant J.">
        <title>Araport11: a complete reannotation of the Arabidopsis thaliana reference genome.</title>
        <authorList>
            <person name="Cheng C.Y."/>
            <person name="Krishnakumar V."/>
            <person name="Chan A.P."/>
            <person name="Thibaud-Nissen F."/>
            <person name="Schobel S."/>
            <person name="Town C.D."/>
        </authorList>
    </citation>
    <scope>GENOME REANNOTATION</scope>
    <source>
        <strain>cv. Columbia</strain>
    </source>
</reference>
<reference key="4">
    <citation type="journal article" date="2003" name="Science">
        <title>Empirical analysis of transcriptional activity in the Arabidopsis genome.</title>
        <authorList>
            <person name="Yamada K."/>
            <person name="Lim J."/>
            <person name="Dale J.M."/>
            <person name="Chen H."/>
            <person name="Shinn P."/>
            <person name="Palm C.J."/>
            <person name="Southwick A.M."/>
            <person name="Wu H.C."/>
            <person name="Kim C.J."/>
            <person name="Nguyen M."/>
            <person name="Pham P.K."/>
            <person name="Cheuk R.F."/>
            <person name="Karlin-Newmann G."/>
            <person name="Liu S.X."/>
            <person name="Lam B."/>
            <person name="Sakano H."/>
            <person name="Wu T."/>
            <person name="Yu G."/>
            <person name="Miranda M."/>
            <person name="Quach H.L."/>
            <person name="Tripp M."/>
            <person name="Chang C.H."/>
            <person name="Lee J.M."/>
            <person name="Toriumi M.J."/>
            <person name="Chan M.M."/>
            <person name="Tang C.C."/>
            <person name="Onodera C.S."/>
            <person name="Deng J.M."/>
            <person name="Akiyama K."/>
            <person name="Ansari Y."/>
            <person name="Arakawa T."/>
            <person name="Banh J."/>
            <person name="Banno F."/>
            <person name="Bowser L."/>
            <person name="Brooks S.Y."/>
            <person name="Carninci P."/>
            <person name="Chao Q."/>
            <person name="Choy N."/>
            <person name="Enju A."/>
            <person name="Goldsmith A.D."/>
            <person name="Gurjal M."/>
            <person name="Hansen N.F."/>
            <person name="Hayashizaki Y."/>
            <person name="Johnson-Hopson C."/>
            <person name="Hsuan V.W."/>
            <person name="Iida K."/>
            <person name="Karnes M."/>
            <person name="Khan S."/>
            <person name="Koesema E."/>
            <person name="Ishida J."/>
            <person name="Jiang P.X."/>
            <person name="Jones T."/>
            <person name="Kawai J."/>
            <person name="Kamiya A."/>
            <person name="Meyers C."/>
            <person name="Nakajima M."/>
            <person name="Narusaka M."/>
            <person name="Seki M."/>
            <person name="Sakurai T."/>
            <person name="Satou M."/>
            <person name="Tamse R."/>
            <person name="Vaysberg M."/>
            <person name="Wallender E.K."/>
            <person name="Wong C."/>
            <person name="Yamamura Y."/>
            <person name="Yuan S."/>
            <person name="Shinozaki K."/>
            <person name="Davis R.W."/>
            <person name="Theologis A."/>
            <person name="Ecker J.R."/>
        </authorList>
    </citation>
    <scope>NUCLEOTIDE SEQUENCE [LARGE SCALE MRNA]</scope>
    <source>
        <strain>cv. Columbia</strain>
    </source>
</reference>
<reference key="5">
    <citation type="submission" date="2002-03" db="EMBL/GenBank/DDBJ databases">
        <title>Full-length cDNA from Arabidopsis thaliana.</title>
        <authorList>
            <person name="Brover V.V."/>
            <person name="Troukhan M.E."/>
            <person name="Alexandrov N.A."/>
            <person name="Lu Y.-P."/>
            <person name="Flavell R.B."/>
            <person name="Feldmann K.A."/>
        </authorList>
    </citation>
    <scope>NUCLEOTIDE SEQUENCE [LARGE SCALE MRNA]</scope>
</reference>
<sequence length="301" mass="33597">MVADANGSSSSSFNFLIYGKTGWIGGLLGKLCEAQGITYTYGSGRLQDRQSIVADIESVKPSHVFNAAGVTGRPNVDWCESHKVETIRTNVAGTLTLADICREKGLVLINYATGCIFEYDSGHPLGSGIGFKEEDTPNFTGSFYSKTKAMVEELLKNYENVCTLRVRMPISSDLTNPRNFITKIARYEKVVDIPNSMTILDELLPISIEMAKRNLTGIYNFTNPGVVSHNEILEMYRDYIDPSFTWKNFTLEEQAKVIVAPRSNNELDATKLKTEFPELMSIKESLIKFVFEPNKKTEVKA</sequence>
<organism>
    <name type="scientific">Arabidopsis thaliana</name>
    <name type="common">Mouse-ear cress</name>
    <dbReference type="NCBI Taxonomy" id="3702"/>
    <lineage>
        <taxon>Eukaryota</taxon>
        <taxon>Viridiplantae</taxon>
        <taxon>Streptophyta</taxon>
        <taxon>Embryophyta</taxon>
        <taxon>Tracheophyta</taxon>
        <taxon>Spermatophyta</taxon>
        <taxon>Magnoliopsida</taxon>
        <taxon>eudicotyledons</taxon>
        <taxon>Gunneridae</taxon>
        <taxon>Pentapetalae</taxon>
        <taxon>rosids</taxon>
        <taxon>malvids</taxon>
        <taxon>Brassicales</taxon>
        <taxon>Brassicaceae</taxon>
        <taxon>Camelineae</taxon>
        <taxon>Arabidopsis</taxon>
    </lineage>
</organism>
<comment type="function">
    <text evidence="2">Bifunctional enzyme involved in dTDP-beta-L-rhamnose biosynthesis. Catalyzes the epimerization of the C3' and C5'positions of dTDP-6-deoxy-4-keto-alpha-D-glucose to form dTDP-4-keto-beta-L-rhamnose and its reduction to yield dTDP-beta-L-rhamnose. Can form UDP-beta-L-rhamnose from UDP-6-deoxy-4-keto-alpha-D-glucose, but cannot convert GDP-4-dehydro-6-deoxy-D-mannose to GDP-fucose.</text>
</comment>
<comment type="catalytic activity">
    <reaction evidence="2">
        <text>dTDP-4-dehydro-6-deoxy-alpha-D-glucose = dTDP-4-dehydro-beta-L-rhamnose</text>
        <dbReference type="Rhea" id="RHEA:16969"/>
        <dbReference type="ChEBI" id="CHEBI:57649"/>
        <dbReference type="ChEBI" id="CHEBI:62830"/>
        <dbReference type="EC" id="5.1.3.13"/>
    </reaction>
</comment>
<comment type="catalytic activity">
    <reaction evidence="2">
        <text>dTDP-beta-L-rhamnose + NADP(+) = dTDP-4-dehydro-beta-L-rhamnose + NADPH + H(+)</text>
        <dbReference type="Rhea" id="RHEA:21796"/>
        <dbReference type="ChEBI" id="CHEBI:15378"/>
        <dbReference type="ChEBI" id="CHEBI:57510"/>
        <dbReference type="ChEBI" id="CHEBI:57783"/>
        <dbReference type="ChEBI" id="CHEBI:58349"/>
        <dbReference type="ChEBI" id="CHEBI:62830"/>
        <dbReference type="EC" id="1.1.1.133"/>
    </reaction>
</comment>
<comment type="biophysicochemical properties">
    <kinetics>
        <KM evidence="2">16.9 uM for dTDP-4-dehydro-6-deoxy-alpha-D-glucose</KM>
        <KM evidence="2">90 uM for NADPH</KM>
    </kinetics>
    <phDependence>
        <text evidence="2">Optimum pH is 5.5-7.5.</text>
    </phDependence>
    <temperatureDependence>
        <text evidence="2">Optimum temperature is 30 degrees Celsius.</text>
    </temperatureDependence>
</comment>
<comment type="pathway">
    <text>Carbohydrate biosynthesis; dTDP-L-rhamnose biosynthesis.</text>
</comment>
<comment type="tissue specificity">
    <text evidence="2">Expressed in roots, leaves, stems and flowers.</text>
</comment>
<comment type="similarity">
    <text evidence="4">Belongs to the dTDP-4-dehydrorhamnose reductase family.</text>
</comment>
<keyword id="KW-0002">3D-structure</keyword>
<keyword id="KW-0961">Cell wall biogenesis/degradation</keyword>
<keyword id="KW-0413">Isomerase</keyword>
<keyword id="KW-0521">NADP</keyword>
<keyword id="KW-0560">Oxidoreductase</keyword>
<keyword id="KW-1185">Reference proteome</keyword>
<proteinExistence type="evidence at protein level"/>